<name>SYA_MESHJ</name>
<evidence type="ECO:0000255" key="1">
    <source>
        <dbReference type="HAMAP-Rule" id="MF_00036"/>
    </source>
</evidence>
<organism>
    <name type="scientific">Mesomycoplasma hyopneumoniae (strain J / ATCC 25934 / NCTC 10110)</name>
    <name type="common">Mycoplasma hyopneumoniae</name>
    <dbReference type="NCBI Taxonomy" id="262719"/>
    <lineage>
        <taxon>Bacteria</taxon>
        <taxon>Bacillati</taxon>
        <taxon>Mycoplasmatota</taxon>
        <taxon>Mycoplasmoidales</taxon>
        <taxon>Metamycoplasmataceae</taxon>
        <taxon>Mesomycoplasma</taxon>
    </lineage>
</organism>
<protein>
    <recommendedName>
        <fullName evidence="1">Alanine--tRNA ligase</fullName>
        <ecNumber evidence="1">6.1.1.7</ecNumber>
    </recommendedName>
    <alternativeName>
        <fullName evidence="1">Alanyl-tRNA synthetase</fullName>
        <shortName evidence="1">AlaRS</shortName>
    </alternativeName>
</protein>
<keyword id="KW-0030">Aminoacyl-tRNA synthetase</keyword>
<keyword id="KW-0067">ATP-binding</keyword>
<keyword id="KW-0963">Cytoplasm</keyword>
<keyword id="KW-0436">Ligase</keyword>
<keyword id="KW-0479">Metal-binding</keyword>
<keyword id="KW-0547">Nucleotide-binding</keyword>
<keyword id="KW-0648">Protein biosynthesis</keyword>
<keyword id="KW-0694">RNA-binding</keyword>
<keyword id="KW-0820">tRNA-binding</keyword>
<keyword id="KW-0862">Zinc</keyword>
<gene>
    <name evidence="1" type="primary">alaS</name>
    <name type="ordered locus">MHJ_0197</name>
</gene>
<feature type="chain" id="PRO_0000075152" description="Alanine--tRNA ligase">
    <location>
        <begin position="1"/>
        <end position="883"/>
    </location>
</feature>
<feature type="binding site" evidence="1">
    <location>
        <position position="560"/>
    </location>
    <ligand>
        <name>Zn(2+)</name>
        <dbReference type="ChEBI" id="CHEBI:29105"/>
    </ligand>
</feature>
<feature type="binding site" evidence="1">
    <location>
        <position position="564"/>
    </location>
    <ligand>
        <name>Zn(2+)</name>
        <dbReference type="ChEBI" id="CHEBI:29105"/>
    </ligand>
</feature>
<feature type="binding site" evidence="1">
    <location>
        <position position="665"/>
    </location>
    <ligand>
        <name>Zn(2+)</name>
        <dbReference type="ChEBI" id="CHEBI:29105"/>
    </ligand>
</feature>
<feature type="binding site" evidence="1">
    <location>
        <position position="669"/>
    </location>
    <ligand>
        <name>Zn(2+)</name>
        <dbReference type="ChEBI" id="CHEBI:29105"/>
    </ligand>
</feature>
<sequence length="883" mass="102477">MEKLSANKIRQLWIDFFRERNHFFIESKPLVPQNDDSLLWINSGVATLKDYFTGKKIPPSKRLVNSQKALRTNDIENVGLTSRHHTLFEMLGNFSIGDYFKTEAIDYAYEFLTKKLKLDPKNLFITYYDGDDITFEKWKSLGFSNEKLIKGSRKTNFWDLGQGPCGPCSEIYFDRGPKFDSRGSELIKNEIENDRFIEIWNIVFSEFNNDGQQNYTPLKSKNIDTGAGFERIVSILQDGPTNYDTDLFLPIIAEIEKNTVFRYKIENYFLKEPRQTQINKSFRIIADHIRAITLAINDGVQPSNLHRGYIIRRLIRRAYWNGKELGISHPFLYKLVEIVGKTLDYRFDIPTISKIILNEEENFAKTLEIGYNLLESQLKINKNQIKPVTVFKLFETYGFPVELTKEILAEKNIDFDLSQLVEFQEKHSQISRAKKTTGMQKVINSLTQIKAKISDFIGYHTHHIETKISFLANKDEEVAETNGENLSYVIFEKTPFYATAGGQKHDQGWIIQNNSTIEILDVFKDKFLNNIHVFKGKIVKNQPVFLKLDTKNRLNLERNHSGTHLLFASLRQEFGSEIKQLGSDNNEDRLTFDFPLNRKPSDQEIKSVENRINSYINQKIKRKYLVTNLEEAQKLNAIMTLEESEYMDPNSLRLVIFDKITTDLCGGTHIENTELLEKFTILSCQSKGSGIYRIRAVTSWNKYFEFLKGKIQEILSKISALKNKIKKIEPNFGLNLPNLVDLEQQFDYLKKIEDDLRIYYKKLLKSQLRIAKSELDANKIIEIGKFSFYLDFNLPLHNLKQIAATWREQNPRISFILGANLVNNEFLIIVSSAILASNQILEKIFEIFTGSGGGNYKIAQGKIQKKPEKEVFIKLLWENITEF</sequence>
<comment type="function">
    <text evidence="1">Catalyzes the attachment of alanine to tRNA(Ala) in a two-step reaction: alanine is first activated by ATP to form Ala-AMP and then transferred to the acceptor end of tRNA(Ala). Also edits incorrectly charged Ser-tRNA(Ala) and Gly-tRNA(Ala) via its editing domain.</text>
</comment>
<comment type="catalytic activity">
    <reaction evidence="1">
        <text>tRNA(Ala) + L-alanine + ATP = L-alanyl-tRNA(Ala) + AMP + diphosphate</text>
        <dbReference type="Rhea" id="RHEA:12540"/>
        <dbReference type="Rhea" id="RHEA-COMP:9657"/>
        <dbReference type="Rhea" id="RHEA-COMP:9923"/>
        <dbReference type="ChEBI" id="CHEBI:30616"/>
        <dbReference type="ChEBI" id="CHEBI:33019"/>
        <dbReference type="ChEBI" id="CHEBI:57972"/>
        <dbReference type="ChEBI" id="CHEBI:78442"/>
        <dbReference type="ChEBI" id="CHEBI:78497"/>
        <dbReference type="ChEBI" id="CHEBI:456215"/>
        <dbReference type="EC" id="6.1.1.7"/>
    </reaction>
</comment>
<comment type="cofactor">
    <cofactor evidence="1">
        <name>Zn(2+)</name>
        <dbReference type="ChEBI" id="CHEBI:29105"/>
    </cofactor>
    <text evidence="1">Binds 1 zinc ion per subunit.</text>
</comment>
<comment type="subcellular location">
    <subcellularLocation>
        <location evidence="1">Cytoplasm</location>
    </subcellularLocation>
</comment>
<comment type="domain">
    <text evidence="1">Consists of three domains; the N-terminal catalytic domain, the editing domain and the C-terminal C-Ala domain. The editing domain removes incorrectly charged amino acids, while the C-Ala domain, along with tRNA(Ala), serves as a bridge to cooperatively bring together the editing and aminoacylation centers thus stimulating deacylation of misacylated tRNAs.</text>
</comment>
<comment type="similarity">
    <text evidence="1">Belongs to the class-II aminoacyl-tRNA synthetase family.</text>
</comment>
<dbReference type="EC" id="6.1.1.7" evidence="1"/>
<dbReference type="EMBL" id="AE017243">
    <property type="protein sequence ID" value="AAZ44288.2"/>
    <property type="molecule type" value="Genomic_DNA"/>
</dbReference>
<dbReference type="RefSeq" id="WP_044284601.1">
    <property type="nucleotide sequence ID" value="NC_007295.1"/>
</dbReference>
<dbReference type="SMR" id="Q4AAD3"/>
<dbReference type="GeneID" id="41334499"/>
<dbReference type="KEGG" id="mhj:MHJ_0197"/>
<dbReference type="eggNOG" id="COG0013">
    <property type="taxonomic scope" value="Bacteria"/>
</dbReference>
<dbReference type="HOGENOM" id="CLU_004485_1_1_14"/>
<dbReference type="OrthoDB" id="9803884at2"/>
<dbReference type="Proteomes" id="UP000000548">
    <property type="component" value="Chromosome"/>
</dbReference>
<dbReference type="GO" id="GO:0005829">
    <property type="term" value="C:cytosol"/>
    <property type="evidence" value="ECO:0007669"/>
    <property type="project" value="TreeGrafter"/>
</dbReference>
<dbReference type="GO" id="GO:0004813">
    <property type="term" value="F:alanine-tRNA ligase activity"/>
    <property type="evidence" value="ECO:0007669"/>
    <property type="project" value="UniProtKB-UniRule"/>
</dbReference>
<dbReference type="GO" id="GO:0002161">
    <property type="term" value="F:aminoacyl-tRNA deacylase activity"/>
    <property type="evidence" value="ECO:0007669"/>
    <property type="project" value="TreeGrafter"/>
</dbReference>
<dbReference type="GO" id="GO:0005524">
    <property type="term" value="F:ATP binding"/>
    <property type="evidence" value="ECO:0007669"/>
    <property type="project" value="UniProtKB-UniRule"/>
</dbReference>
<dbReference type="GO" id="GO:0000049">
    <property type="term" value="F:tRNA binding"/>
    <property type="evidence" value="ECO:0007669"/>
    <property type="project" value="UniProtKB-KW"/>
</dbReference>
<dbReference type="GO" id="GO:0008270">
    <property type="term" value="F:zinc ion binding"/>
    <property type="evidence" value="ECO:0007669"/>
    <property type="project" value="UniProtKB-UniRule"/>
</dbReference>
<dbReference type="GO" id="GO:0006419">
    <property type="term" value="P:alanyl-tRNA aminoacylation"/>
    <property type="evidence" value="ECO:0007669"/>
    <property type="project" value="UniProtKB-UniRule"/>
</dbReference>
<dbReference type="CDD" id="cd00673">
    <property type="entry name" value="AlaRS_core"/>
    <property type="match status" value="1"/>
</dbReference>
<dbReference type="FunFam" id="3.30.930.10:FF:000046">
    <property type="entry name" value="Alanine--tRNA ligase"/>
    <property type="match status" value="1"/>
</dbReference>
<dbReference type="FunFam" id="3.30.980.10:FF:000004">
    <property type="entry name" value="Alanine--tRNA ligase, cytoplasmic"/>
    <property type="match status" value="1"/>
</dbReference>
<dbReference type="Gene3D" id="2.40.30.130">
    <property type="match status" value="1"/>
</dbReference>
<dbReference type="Gene3D" id="3.10.310.40">
    <property type="match status" value="1"/>
</dbReference>
<dbReference type="Gene3D" id="3.30.930.10">
    <property type="entry name" value="Bira Bifunctional Protein, Domain 2"/>
    <property type="match status" value="1"/>
</dbReference>
<dbReference type="Gene3D" id="3.30.980.10">
    <property type="entry name" value="Threonyl-trna Synthetase, Chain A, domain 2"/>
    <property type="match status" value="1"/>
</dbReference>
<dbReference type="HAMAP" id="MF_00036_B">
    <property type="entry name" value="Ala_tRNA_synth_B"/>
    <property type="match status" value="1"/>
</dbReference>
<dbReference type="InterPro" id="IPR045864">
    <property type="entry name" value="aa-tRNA-synth_II/BPL/LPL"/>
</dbReference>
<dbReference type="InterPro" id="IPR002318">
    <property type="entry name" value="Ala-tRNA-lgiase_IIc"/>
</dbReference>
<dbReference type="InterPro" id="IPR018162">
    <property type="entry name" value="Ala-tRNA-ligase_IIc_anticod-bd"/>
</dbReference>
<dbReference type="InterPro" id="IPR018165">
    <property type="entry name" value="Ala-tRNA-synth_IIc_core"/>
</dbReference>
<dbReference type="InterPro" id="IPR018164">
    <property type="entry name" value="Ala-tRNA-synth_IIc_N"/>
</dbReference>
<dbReference type="InterPro" id="IPR050058">
    <property type="entry name" value="Ala-tRNA_ligase"/>
</dbReference>
<dbReference type="InterPro" id="IPR023033">
    <property type="entry name" value="Ala_tRNA_ligase_euk/bac"/>
</dbReference>
<dbReference type="InterPro" id="IPR018163">
    <property type="entry name" value="Thr/Ala-tRNA-synth_IIc_edit"/>
</dbReference>
<dbReference type="InterPro" id="IPR009000">
    <property type="entry name" value="Transl_B-barrel_sf"/>
</dbReference>
<dbReference type="InterPro" id="IPR012947">
    <property type="entry name" value="tRNA_SAD"/>
</dbReference>
<dbReference type="NCBIfam" id="TIGR00344">
    <property type="entry name" value="alaS"/>
    <property type="match status" value="1"/>
</dbReference>
<dbReference type="PANTHER" id="PTHR11777:SF9">
    <property type="entry name" value="ALANINE--TRNA LIGASE, CYTOPLASMIC"/>
    <property type="match status" value="1"/>
</dbReference>
<dbReference type="PANTHER" id="PTHR11777">
    <property type="entry name" value="ALANYL-TRNA SYNTHETASE"/>
    <property type="match status" value="1"/>
</dbReference>
<dbReference type="Pfam" id="PF01411">
    <property type="entry name" value="tRNA-synt_2c"/>
    <property type="match status" value="1"/>
</dbReference>
<dbReference type="Pfam" id="PF07973">
    <property type="entry name" value="tRNA_SAD"/>
    <property type="match status" value="1"/>
</dbReference>
<dbReference type="PRINTS" id="PR00980">
    <property type="entry name" value="TRNASYNTHALA"/>
</dbReference>
<dbReference type="SMART" id="SM00863">
    <property type="entry name" value="tRNA_SAD"/>
    <property type="match status" value="1"/>
</dbReference>
<dbReference type="SUPFAM" id="SSF55681">
    <property type="entry name" value="Class II aaRS and biotin synthetases"/>
    <property type="match status" value="1"/>
</dbReference>
<dbReference type="SUPFAM" id="SSF101353">
    <property type="entry name" value="Putative anticodon-binding domain of alanyl-tRNA synthetase (AlaRS)"/>
    <property type="match status" value="1"/>
</dbReference>
<dbReference type="SUPFAM" id="SSF55186">
    <property type="entry name" value="ThrRS/AlaRS common domain"/>
    <property type="match status" value="1"/>
</dbReference>
<dbReference type="SUPFAM" id="SSF50447">
    <property type="entry name" value="Translation proteins"/>
    <property type="match status" value="1"/>
</dbReference>
<dbReference type="PROSITE" id="PS50860">
    <property type="entry name" value="AA_TRNA_LIGASE_II_ALA"/>
    <property type="match status" value="1"/>
</dbReference>
<accession>Q4AAD3</accession>
<proteinExistence type="inferred from homology"/>
<reference key="1">
    <citation type="journal article" date="2005" name="J. Bacteriol.">
        <title>Swine and poultry pathogens: the complete genome sequences of two strains of Mycoplasma hyopneumoniae and a strain of Mycoplasma synoviae.</title>
        <authorList>
            <person name="Vasconcelos A.T.R."/>
            <person name="Ferreira H.B."/>
            <person name="Bizarro C.V."/>
            <person name="Bonatto S.L."/>
            <person name="Carvalho M.O."/>
            <person name="Pinto P.M."/>
            <person name="Almeida D.F."/>
            <person name="Almeida L.G.P."/>
            <person name="Almeida R."/>
            <person name="Alves-Junior L."/>
            <person name="Assuncao E.N."/>
            <person name="Azevedo V.A.C."/>
            <person name="Bogo M.R."/>
            <person name="Brigido M.M."/>
            <person name="Brocchi M."/>
            <person name="Burity H.A."/>
            <person name="Camargo A.A."/>
            <person name="Camargo S.S."/>
            <person name="Carepo M.S."/>
            <person name="Carraro D.M."/>
            <person name="de Mattos Cascardo J.C."/>
            <person name="Castro L.A."/>
            <person name="Cavalcanti G."/>
            <person name="Chemale G."/>
            <person name="Collevatti R.G."/>
            <person name="Cunha C.W."/>
            <person name="Dallagiovanna B."/>
            <person name="Dambros B.P."/>
            <person name="Dellagostin O.A."/>
            <person name="Falcao C."/>
            <person name="Fantinatti-Garboggini F."/>
            <person name="Felipe M.S.S."/>
            <person name="Fiorentin L."/>
            <person name="Franco G.R."/>
            <person name="Freitas N.S.A."/>
            <person name="Frias D."/>
            <person name="Grangeiro T.B."/>
            <person name="Grisard E.C."/>
            <person name="Guimaraes C.T."/>
            <person name="Hungria M."/>
            <person name="Jardim S.N."/>
            <person name="Krieger M.A."/>
            <person name="Laurino J.P."/>
            <person name="Lima L.F.A."/>
            <person name="Lopes M.I."/>
            <person name="Loreto E.L.S."/>
            <person name="Madeira H.M.F."/>
            <person name="Manfio G.P."/>
            <person name="Maranhao A.Q."/>
            <person name="Martinkovics C.T."/>
            <person name="Medeiros S.R.B."/>
            <person name="Moreira M.A.M."/>
            <person name="Neiva M."/>
            <person name="Ramalho-Neto C.E."/>
            <person name="Nicolas M.F."/>
            <person name="Oliveira S.C."/>
            <person name="Paixao R.F.C."/>
            <person name="Pedrosa F.O."/>
            <person name="Pena S.D.J."/>
            <person name="Pereira M."/>
            <person name="Pereira-Ferrari L."/>
            <person name="Piffer I."/>
            <person name="Pinto L.S."/>
            <person name="Potrich D.P."/>
            <person name="Salim A.C.M."/>
            <person name="Santos F.R."/>
            <person name="Schmitt R."/>
            <person name="Schneider M.P.C."/>
            <person name="Schrank A."/>
            <person name="Schrank I.S."/>
            <person name="Schuck A.F."/>
            <person name="Seuanez H.N."/>
            <person name="Silva D.W."/>
            <person name="Silva R."/>
            <person name="Silva S.C."/>
            <person name="Soares C.M.A."/>
            <person name="Souza K.R.L."/>
            <person name="Souza R.C."/>
            <person name="Staats C.C."/>
            <person name="Steffens M.B.R."/>
            <person name="Teixeira S.M.R."/>
            <person name="Urmenyi T.P."/>
            <person name="Vainstein M.H."/>
            <person name="Zuccherato L.W."/>
            <person name="Simpson A.J.G."/>
            <person name="Zaha A."/>
        </authorList>
    </citation>
    <scope>NUCLEOTIDE SEQUENCE [LARGE SCALE GENOMIC DNA]</scope>
    <source>
        <strain>J / ATCC 25934 / NCTC 10110</strain>
    </source>
</reference>